<organism>
    <name type="scientific">Mus musculus</name>
    <name type="common">Mouse</name>
    <dbReference type="NCBI Taxonomy" id="10090"/>
    <lineage>
        <taxon>Eukaryota</taxon>
        <taxon>Metazoa</taxon>
        <taxon>Chordata</taxon>
        <taxon>Craniata</taxon>
        <taxon>Vertebrata</taxon>
        <taxon>Euteleostomi</taxon>
        <taxon>Mammalia</taxon>
        <taxon>Eutheria</taxon>
        <taxon>Euarchontoglires</taxon>
        <taxon>Glires</taxon>
        <taxon>Rodentia</taxon>
        <taxon>Myomorpha</taxon>
        <taxon>Muroidea</taxon>
        <taxon>Muridae</taxon>
        <taxon>Murinae</taxon>
        <taxon>Mus</taxon>
        <taxon>Mus</taxon>
    </lineage>
</organism>
<comment type="subcellular location">
    <subcellularLocation>
        <location evidence="3">Nucleus</location>
    </subcellularLocation>
</comment>
<proteinExistence type="evidence at transcript level"/>
<protein>
    <recommendedName>
        <fullName>T-cell leukemia homeobox protein 3</fullName>
    </recommendedName>
    <alternativeName>
        <fullName>Homeobox TLX-3</fullName>
    </alternativeName>
    <alternativeName>
        <fullName>Homeobox protein Hox-11L2</fullName>
    </alternativeName>
    <alternativeName>
        <fullName>Respiratory neuron homeobox protein</fullName>
    </alternativeName>
</protein>
<gene>
    <name type="primary">Tlx3</name>
    <name type="synonym">Hox11l2</name>
    <name type="synonym">Rnx</name>
    <name type="synonym">Tlx1l2</name>
</gene>
<name>TLX3_MOUSE</name>
<keyword id="KW-0217">Developmental protein</keyword>
<keyword id="KW-0238">DNA-binding</keyword>
<keyword id="KW-0371">Homeobox</keyword>
<keyword id="KW-0539">Nucleus</keyword>
<keyword id="KW-1185">Reference proteome</keyword>
<dbReference type="EMBL" id="AJ223801">
    <property type="protein sequence ID" value="CAA11551.1"/>
    <property type="molecule type" value="mRNA"/>
</dbReference>
<dbReference type="EMBL" id="AK141870">
    <property type="protein sequence ID" value="BAE24864.1"/>
    <property type="molecule type" value="mRNA"/>
</dbReference>
<dbReference type="EMBL" id="AL772409">
    <property type="status" value="NOT_ANNOTATED_CDS"/>
    <property type="molecule type" value="Genomic_DNA"/>
</dbReference>
<dbReference type="EMBL" id="CH466604">
    <property type="protein sequence ID" value="EDL23743.1"/>
    <property type="molecule type" value="Genomic_DNA"/>
</dbReference>
<dbReference type="EMBL" id="BC141308">
    <property type="protein sequence ID" value="AAI41309.1"/>
    <property type="molecule type" value="mRNA"/>
</dbReference>
<dbReference type="EMBL" id="BC145631">
    <property type="protein sequence ID" value="AAI45632.1"/>
    <property type="molecule type" value="mRNA"/>
</dbReference>
<dbReference type="CCDS" id="CCDS24533.1"/>
<dbReference type="RefSeq" id="NP_064300.2">
    <property type="nucleotide sequence ID" value="NM_019916.2"/>
</dbReference>
<dbReference type="SMR" id="O55144"/>
<dbReference type="BioGRID" id="205124">
    <property type="interactions" value="34"/>
</dbReference>
<dbReference type="FunCoup" id="O55144">
    <property type="interactions" value="1551"/>
</dbReference>
<dbReference type="IntAct" id="O55144">
    <property type="interactions" value="34"/>
</dbReference>
<dbReference type="STRING" id="10090.ENSMUSP00000047457"/>
<dbReference type="iPTMnet" id="O55144"/>
<dbReference type="PhosphoSitePlus" id="O55144"/>
<dbReference type="PaxDb" id="10090-ENSMUSP00000047457"/>
<dbReference type="ProteomicsDB" id="260670"/>
<dbReference type="Antibodypedia" id="28858">
    <property type="antibodies" value="163 antibodies from 24 providers"/>
</dbReference>
<dbReference type="DNASU" id="27140"/>
<dbReference type="Ensembl" id="ENSMUST00000037746.8">
    <property type="protein sequence ID" value="ENSMUSP00000047457.7"/>
    <property type="gene ID" value="ENSMUSG00000040610.8"/>
</dbReference>
<dbReference type="GeneID" id="27140"/>
<dbReference type="KEGG" id="mmu:27140"/>
<dbReference type="UCSC" id="uc007ikg.2">
    <property type="organism name" value="mouse"/>
</dbReference>
<dbReference type="AGR" id="MGI:1351209"/>
<dbReference type="CTD" id="30012"/>
<dbReference type="MGI" id="MGI:1351209">
    <property type="gene designation" value="Tlx3"/>
</dbReference>
<dbReference type="VEuPathDB" id="HostDB:ENSMUSG00000040610"/>
<dbReference type="eggNOG" id="KOG0488">
    <property type="taxonomic scope" value="Eukaryota"/>
</dbReference>
<dbReference type="GeneTree" id="ENSGT00940000160629"/>
<dbReference type="HOGENOM" id="CLU_053409_1_0_1"/>
<dbReference type="InParanoid" id="O55144"/>
<dbReference type="OMA" id="TPHQHEP"/>
<dbReference type="OrthoDB" id="9451579at2759"/>
<dbReference type="PhylomeDB" id="O55144"/>
<dbReference type="TreeFam" id="TF325347"/>
<dbReference type="BioGRID-ORCS" id="27140">
    <property type="hits" value="4 hits in 81 CRISPR screens"/>
</dbReference>
<dbReference type="PRO" id="PR:O55144"/>
<dbReference type="Proteomes" id="UP000000589">
    <property type="component" value="Chromosome 11"/>
</dbReference>
<dbReference type="RNAct" id="O55144">
    <property type="molecule type" value="protein"/>
</dbReference>
<dbReference type="Bgee" id="ENSMUSG00000040610">
    <property type="expression patterns" value="Expressed in lumbar dorsal root ganglion and 52 other cell types or tissues"/>
</dbReference>
<dbReference type="GO" id="GO:0005654">
    <property type="term" value="C:nucleoplasm"/>
    <property type="evidence" value="ECO:0007669"/>
    <property type="project" value="Ensembl"/>
</dbReference>
<dbReference type="GO" id="GO:0005634">
    <property type="term" value="C:nucleus"/>
    <property type="evidence" value="ECO:0000314"/>
    <property type="project" value="MGI"/>
</dbReference>
<dbReference type="GO" id="GO:0000981">
    <property type="term" value="F:DNA-binding transcription factor activity, RNA polymerase II-specific"/>
    <property type="evidence" value="ECO:0007669"/>
    <property type="project" value="InterPro"/>
</dbReference>
<dbReference type="GO" id="GO:1990837">
    <property type="term" value="F:sequence-specific double-stranded DNA binding"/>
    <property type="evidence" value="ECO:0007669"/>
    <property type="project" value="Ensembl"/>
</dbReference>
<dbReference type="GO" id="GO:0007417">
    <property type="term" value="P:central nervous system development"/>
    <property type="evidence" value="ECO:0000315"/>
    <property type="project" value="MGI"/>
</dbReference>
<dbReference type="GO" id="GO:0097154">
    <property type="term" value="P:GABAergic neuron differentiation"/>
    <property type="evidence" value="ECO:0000316"/>
    <property type="project" value="MGI"/>
</dbReference>
<dbReference type="GO" id="GO:0045665">
    <property type="term" value="P:negative regulation of neuron differentiation"/>
    <property type="evidence" value="ECO:0000316"/>
    <property type="project" value="MGI"/>
</dbReference>
<dbReference type="GO" id="GO:0030182">
    <property type="term" value="P:neuron differentiation"/>
    <property type="evidence" value="ECO:0000315"/>
    <property type="project" value="MGI"/>
</dbReference>
<dbReference type="GO" id="GO:0048665">
    <property type="term" value="P:neuron fate specification"/>
    <property type="evidence" value="ECO:0000315"/>
    <property type="project" value="MGI"/>
</dbReference>
<dbReference type="GO" id="GO:0001764">
    <property type="term" value="P:neuron migration"/>
    <property type="evidence" value="ECO:0000315"/>
    <property type="project" value="MGI"/>
</dbReference>
<dbReference type="GO" id="GO:0002087">
    <property type="term" value="P:regulation of respiratory gaseous exchange by nervous system process"/>
    <property type="evidence" value="ECO:0000315"/>
    <property type="project" value="MGI"/>
</dbReference>
<dbReference type="GO" id="GO:0007585">
    <property type="term" value="P:respiratory gaseous exchange by respiratory system"/>
    <property type="evidence" value="ECO:0000315"/>
    <property type="project" value="MGI"/>
</dbReference>
<dbReference type="CDD" id="cd00086">
    <property type="entry name" value="homeodomain"/>
    <property type="match status" value="1"/>
</dbReference>
<dbReference type="FunFam" id="1.10.10.60:FF:000040">
    <property type="entry name" value="T-cell leukemia homeobox protein 3"/>
    <property type="match status" value="1"/>
</dbReference>
<dbReference type="Gene3D" id="1.10.10.60">
    <property type="entry name" value="Homeodomain-like"/>
    <property type="match status" value="1"/>
</dbReference>
<dbReference type="InterPro" id="IPR001356">
    <property type="entry name" value="HD"/>
</dbReference>
<dbReference type="InterPro" id="IPR020479">
    <property type="entry name" value="HD_metazoa"/>
</dbReference>
<dbReference type="InterPro" id="IPR017970">
    <property type="entry name" value="Homeobox_CS"/>
</dbReference>
<dbReference type="InterPro" id="IPR009057">
    <property type="entry name" value="Homeodomain-like_sf"/>
</dbReference>
<dbReference type="InterPro" id="IPR042247">
    <property type="entry name" value="TLX1/2/3"/>
</dbReference>
<dbReference type="PANTHER" id="PTHR45921">
    <property type="entry name" value="IP01054P"/>
    <property type="match status" value="1"/>
</dbReference>
<dbReference type="PANTHER" id="PTHR45921:SF1">
    <property type="entry name" value="T-CELL LEUKEMIA HOMEOBOX PROTEIN 3"/>
    <property type="match status" value="1"/>
</dbReference>
<dbReference type="Pfam" id="PF00046">
    <property type="entry name" value="Homeodomain"/>
    <property type="match status" value="1"/>
</dbReference>
<dbReference type="PRINTS" id="PR00024">
    <property type="entry name" value="HOMEOBOX"/>
</dbReference>
<dbReference type="SMART" id="SM00389">
    <property type="entry name" value="HOX"/>
    <property type="match status" value="1"/>
</dbReference>
<dbReference type="SUPFAM" id="SSF46689">
    <property type="entry name" value="Homeodomain-like"/>
    <property type="match status" value="1"/>
</dbReference>
<dbReference type="PROSITE" id="PS00027">
    <property type="entry name" value="HOMEOBOX_1"/>
    <property type="match status" value="1"/>
</dbReference>
<dbReference type="PROSITE" id="PS50071">
    <property type="entry name" value="HOMEOBOX_2"/>
    <property type="match status" value="1"/>
</dbReference>
<feature type="chain" id="PRO_0000049339" description="T-cell leukemia homeobox protein 3">
    <location>
        <begin position="1"/>
        <end position="291"/>
    </location>
</feature>
<feature type="DNA-binding region" description="Homeobox" evidence="1">
    <location>
        <begin position="166"/>
        <end position="225"/>
    </location>
</feature>
<feature type="region of interest" description="Disordered" evidence="2">
    <location>
        <begin position="1"/>
        <end position="51"/>
    </location>
</feature>
<feature type="sequence conflict" description="In Ref. 1; CAA11551." evidence="3" ref="1">
    <original>ER</original>
    <variation>DG</variation>
    <location>
        <begin position="232"/>
        <end position="233"/>
    </location>
</feature>
<accession>O55144</accession>
<accession>Q5SQB4</accession>
<reference key="1">
    <citation type="submission" date="1998-01" db="EMBL/GenBank/DDBJ databases">
        <title>Genomic characterization of the human and mouse HOX11L2 genes.</title>
        <authorList>
            <person name="Delgado P."/>
            <person name="Rodriguez R."/>
            <person name="Gonzalez-Sarmiento R."/>
        </authorList>
    </citation>
    <scope>NUCLEOTIDE SEQUENCE [MRNA]</scope>
</reference>
<reference key="2">
    <citation type="journal article" date="2005" name="Science">
        <title>The transcriptional landscape of the mammalian genome.</title>
        <authorList>
            <person name="Carninci P."/>
            <person name="Kasukawa T."/>
            <person name="Katayama S."/>
            <person name="Gough J."/>
            <person name="Frith M.C."/>
            <person name="Maeda N."/>
            <person name="Oyama R."/>
            <person name="Ravasi T."/>
            <person name="Lenhard B."/>
            <person name="Wells C."/>
            <person name="Kodzius R."/>
            <person name="Shimokawa K."/>
            <person name="Bajic V.B."/>
            <person name="Brenner S.E."/>
            <person name="Batalov S."/>
            <person name="Forrest A.R."/>
            <person name="Zavolan M."/>
            <person name="Davis M.J."/>
            <person name="Wilming L.G."/>
            <person name="Aidinis V."/>
            <person name="Allen J.E."/>
            <person name="Ambesi-Impiombato A."/>
            <person name="Apweiler R."/>
            <person name="Aturaliya R.N."/>
            <person name="Bailey T.L."/>
            <person name="Bansal M."/>
            <person name="Baxter L."/>
            <person name="Beisel K.W."/>
            <person name="Bersano T."/>
            <person name="Bono H."/>
            <person name="Chalk A.M."/>
            <person name="Chiu K.P."/>
            <person name="Choudhary V."/>
            <person name="Christoffels A."/>
            <person name="Clutterbuck D.R."/>
            <person name="Crowe M.L."/>
            <person name="Dalla E."/>
            <person name="Dalrymple B.P."/>
            <person name="de Bono B."/>
            <person name="Della Gatta G."/>
            <person name="di Bernardo D."/>
            <person name="Down T."/>
            <person name="Engstrom P."/>
            <person name="Fagiolini M."/>
            <person name="Faulkner G."/>
            <person name="Fletcher C.F."/>
            <person name="Fukushima T."/>
            <person name="Furuno M."/>
            <person name="Futaki S."/>
            <person name="Gariboldi M."/>
            <person name="Georgii-Hemming P."/>
            <person name="Gingeras T.R."/>
            <person name="Gojobori T."/>
            <person name="Green R.E."/>
            <person name="Gustincich S."/>
            <person name="Harbers M."/>
            <person name="Hayashi Y."/>
            <person name="Hensch T.K."/>
            <person name="Hirokawa N."/>
            <person name="Hill D."/>
            <person name="Huminiecki L."/>
            <person name="Iacono M."/>
            <person name="Ikeo K."/>
            <person name="Iwama A."/>
            <person name="Ishikawa T."/>
            <person name="Jakt M."/>
            <person name="Kanapin A."/>
            <person name="Katoh M."/>
            <person name="Kawasawa Y."/>
            <person name="Kelso J."/>
            <person name="Kitamura H."/>
            <person name="Kitano H."/>
            <person name="Kollias G."/>
            <person name="Krishnan S.P."/>
            <person name="Kruger A."/>
            <person name="Kummerfeld S.K."/>
            <person name="Kurochkin I.V."/>
            <person name="Lareau L.F."/>
            <person name="Lazarevic D."/>
            <person name="Lipovich L."/>
            <person name="Liu J."/>
            <person name="Liuni S."/>
            <person name="McWilliam S."/>
            <person name="Madan Babu M."/>
            <person name="Madera M."/>
            <person name="Marchionni L."/>
            <person name="Matsuda H."/>
            <person name="Matsuzawa S."/>
            <person name="Miki H."/>
            <person name="Mignone F."/>
            <person name="Miyake S."/>
            <person name="Morris K."/>
            <person name="Mottagui-Tabar S."/>
            <person name="Mulder N."/>
            <person name="Nakano N."/>
            <person name="Nakauchi H."/>
            <person name="Ng P."/>
            <person name="Nilsson R."/>
            <person name="Nishiguchi S."/>
            <person name="Nishikawa S."/>
            <person name="Nori F."/>
            <person name="Ohara O."/>
            <person name="Okazaki Y."/>
            <person name="Orlando V."/>
            <person name="Pang K.C."/>
            <person name="Pavan W.J."/>
            <person name="Pavesi G."/>
            <person name="Pesole G."/>
            <person name="Petrovsky N."/>
            <person name="Piazza S."/>
            <person name="Reed J."/>
            <person name="Reid J.F."/>
            <person name="Ring B.Z."/>
            <person name="Ringwald M."/>
            <person name="Rost B."/>
            <person name="Ruan Y."/>
            <person name="Salzberg S.L."/>
            <person name="Sandelin A."/>
            <person name="Schneider C."/>
            <person name="Schoenbach C."/>
            <person name="Sekiguchi K."/>
            <person name="Semple C.A."/>
            <person name="Seno S."/>
            <person name="Sessa L."/>
            <person name="Sheng Y."/>
            <person name="Shibata Y."/>
            <person name="Shimada H."/>
            <person name="Shimada K."/>
            <person name="Silva D."/>
            <person name="Sinclair B."/>
            <person name="Sperling S."/>
            <person name="Stupka E."/>
            <person name="Sugiura K."/>
            <person name="Sultana R."/>
            <person name="Takenaka Y."/>
            <person name="Taki K."/>
            <person name="Tammoja K."/>
            <person name="Tan S.L."/>
            <person name="Tang S."/>
            <person name="Taylor M.S."/>
            <person name="Tegner J."/>
            <person name="Teichmann S.A."/>
            <person name="Ueda H.R."/>
            <person name="van Nimwegen E."/>
            <person name="Verardo R."/>
            <person name="Wei C.L."/>
            <person name="Yagi K."/>
            <person name="Yamanishi H."/>
            <person name="Zabarovsky E."/>
            <person name="Zhu S."/>
            <person name="Zimmer A."/>
            <person name="Hide W."/>
            <person name="Bult C."/>
            <person name="Grimmond S.M."/>
            <person name="Teasdale R.D."/>
            <person name="Liu E.T."/>
            <person name="Brusic V."/>
            <person name="Quackenbush J."/>
            <person name="Wahlestedt C."/>
            <person name="Mattick J.S."/>
            <person name="Hume D.A."/>
            <person name="Kai C."/>
            <person name="Sasaki D."/>
            <person name="Tomaru Y."/>
            <person name="Fukuda S."/>
            <person name="Kanamori-Katayama M."/>
            <person name="Suzuki M."/>
            <person name="Aoki J."/>
            <person name="Arakawa T."/>
            <person name="Iida J."/>
            <person name="Imamura K."/>
            <person name="Itoh M."/>
            <person name="Kato T."/>
            <person name="Kawaji H."/>
            <person name="Kawagashira N."/>
            <person name="Kawashima T."/>
            <person name="Kojima M."/>
            <person name="Kondo S."/>
            <person name="Konno H."/>
            <person name="Nakano K."/>
            <person name="Ninomiya N."/>
            <person name="Nishio T."/>
            <person name="Okada M."/>
            <person name="Plessy C."/>
            <person name="Shibata K."/>
            <person name="Shiraki T."/>
            <person name="Suzuki S."/>
            <person name="Tagami M."/>
            <person name="Waki K."/>
            <person name="Watahiki A."/>
            <person name="Okamura-Oho Y."/>
            <person name="Suzuki H."/>
            <person name="Kawai J."/>
            <person name="Hayashizaki Y."/>
        </authorList>
    </citation>
    <scope>NUCLEOTIDE SEQUENCE [LARGE SCALE MRNA]</scope>
    <source>
        <strain>C57BL/6J</strain>
        <tissue>Spinal ganglion</tissue>
    </source>
</reference>
<reference key="3">
    <citation type="journal article" date="2009" name="PLoS Biol.">
        <title>Lineage-specific biology revealed by a finished genome assembly of the mouse.</title>
        <authorList>
            <person name="Church D.M."/>
            <person name="Goodstadt L."/>
            <person name="Hillier L.W."/>
            <person name="Zody M.C."/>
            <person name="Goldstein S."/>
            <person name="She X."/>
            <person name="Bult C.J."/>
            <person name="Agarwala R."/>
            <person name="Cherry J.L."/>
            <person name="DiCuccio M."/>
            <person name="Hlavina W."/>
            <person name="Kapustin Y."/>
            <person name="Meric P."/>
            <person name="Maglott D."/>
            <person name="Birtle Z."/>
            <person name="Marques A.C."/>
            <person name="Graves T."/>
            <person name="Zhou S."/>
            <person name="Teague B."/>
            <person name="Potamousis K."/>
            <person name="Churas C."/>
            <person name="Place M."/>
            <person name="Herschleb J."/>
            <person name="Runnheim R."/>
            <person name="Forrest D."/>
            <person name="Amos-Landgraf J."/>
            <person name="Schwartz D.C."/>
            <person name="Cheng Z."/>
            <person name="Lindblad-Toh K."/>
            <person name="Eichler E.E."/>
            <person name="Ponting C.P."/>
        </authorList>
    </citation>
    <scope>NUCLEOTIDE SEQUENCE [LARGE SCALE GENOMIC DNA]</scope>
    <source>
        <strain>C57BL/6J</strain>
    </source>
</reference>
<reference key="4">
    <citation type="submission" date="2005-07" db="EMBL/GenBank/DDBJ databases">
        <authorList>
            <person name="Mural R.J."/>
            <person name="Adams M.D."/>
            <person name="Myers E.W."/>
            <person name="Smith H.O."/>
            <person name="Venter J.C."/>
        </authorList>
    </citation>
    <scope>NUCLEOTIDE SEQUENCE [LARGE SCALE GENOMIC DNA]</scope>
</reference>
<reference key="5">
    <citation type="journal article" date="2004" name="Genome Res.">
        <title>The status, quality, and expansion of the NIH full-length cDNA project: the Mammalian Gene Collection (MGC).</title>
        <authorList>
            <consortium name="The MGC Project Team"/>
        </authorList>
    </citation>
    <scope>NUCLEOTIDE SEQUENCE [LARGE SCALE MRNA]</scope>
    <source>
        <tissue>Brain</tissue>
    </source>
</reference>
<sequence length="291" mass="31837">MEAPASAQTPHPHEPISFGIDQILNSPDQDSAPAPRGPDGASYLGGPPGGRPGAAYPSLPASFAGLGAPFEDAGSYSVNLSLAPAGVIRVPAHRPLPGAVPPPLPSALPAMPSVPTVSSLGGLNFPWMESSRRFVKDRFTAAAALTPFTVTRRIGHPYQNRTPPKRKKPRTSFSRVQICELEKRFHRQKYLASAERAALAKSLKMTDAQVKTWFQNRRTKWRRQTAEEREAERQQASRLMLQLQHDAFQKSLNDSIQPDPLCLHNSSLFALQNLQPWEEDSSKVPAVTSLV</sequence>
<evidence type="ECO:0000255" key="1">
    <source>
        <dbReference type="PROSITE-ProRule" id="PRU00108"/>
    </source>
</evidence>
<evidence type="ECO:0000256" key="2">
    <source>
        <dbReference type="SAM" id="MobiDB-lite"/>
    </source>
</evidence>
<evidence type="ECO:0000305" key="3"/>